<keyword id="KW-0002">3D-structure</keyword>
<keyword id="KW-0028">Amino-acid biosynthesis</keyword>
<keyword id="KW-0963">Cytoplasm</keyword>
<keyword id="KW-0368">Histidine biosynthesis</keyword>
<keyword id="KW-0413">Isomerase</keyword>
<keyword id="KW-1185">Reference proteome</keyword>
<reference key="1">
    <citation type="journal article" date="2003" name="Genome Res.">
        <title>Comparative complete genome sequence analysis of the amino acid replacements responsible for the thermostability of Corynebacterium efficiens.</title>
        <authorList>
            <person name="Nishio Y."/>
            <person name="Nakamura Y."/>
            <person name="Kawarabayasi Y."/>
            <person name="Usuda Y."/>
            <person name="Kimura E."/>
            <person name="Sugimoto S."/>
            <person name="Matsui K."/>
            <person name="Yamagishi A."/>
            <person name="Kikuchi H."/>
            <person name="Ikeo K."/>
            <person name="Gojobori T."/>
        </authorList>
    </citation>
    <scope>NUCLEOTIDE SEQUENCE [LARGE SCALE GENOMIC DNA]</scope>
    <source>
        <strain>DSM 44549 / YS-314 / AJ 12310 / JCM 11189 / NBRC 100395</strain>
    </source>
</reference>
<name>HIS4_COREF</name>
<organism>
    <name type="scientific">Corynebacterium efficiens (strain DSM 44549 / YS-314 / AJ 12310 / JCM 11189 / NBRC 100395)</name>
    <dbReference type="NCBI Taxonomy" id="196164"/>
    <lineage>
        <taxon>Bacteria</taxon>
        <taxon>Bacillati</taxon>
        <taxon>Actinomycetota</taxon>
        <taxon>Actinomycetes</taxon>
        <taxon>Mycobacteriales</taxon>
        <taxon>Corynebacteriaceae</taxon>
        <taxon>Corynebacterium</taxon>
    </lineage>
</organism>
<protein>
    <recommendedName>
        <fullName evidence="1">1-(5-phosphoribosyl)-5-[(5-phosphoribosylamino)methylideneamino] imidazole-4-carboxamide isomerase</fullName>
        <ecNumber evidence="1">5.3.1.16</ecNumber>
    </recommendedName>
    <alternativeName>
        <fullName evidence="1">Phosphoribosylformimino-5-aminoimidazole carboxamide ribotide isomerase</fullName>
    </alternativeName>
</protein>
<gene>
    <name evidence="1" type="primary">hisA</name>
    <name type="ordered locus">CE1996</name>
</gene>
<comment type="catalytic activity">
    <reaction evidence="1">
        <text>1-(5-phospho-beta-D-ribosyl)-5-[(5-phospho-beta-D-ribosylamino)methylideneamino]imidazole-4-carboxamide = 5-[(5-phospho-1-deoxy-D-ribulos-1-ylimino)methylamino]-1-(5-phospho-beta-D-ribosyl)imidazole-4-carboxamide</text>
        <dbReference type="Rhea" id="RHEA:15469"/>
        <dbReference type="ChEBI" id="CHEBI:58435"/>
        <dbReference type="ChEBI" id="CHEBI:58525"/>
        <dbReference type="EC" id="5.3.1.16"/>
    </reaction>
</comment>
<comment type="pathway">
    <text evidence="1">Amino-acid biosynthesis; L-histidine biosynthesis; L-histidine from 5-phospho-alpha-D-ribose 1-diphosphate: step 4/9.</text>
</comment>
<comment type="subcellular location">
    <subcellularLocation>
        <location evidence="1">Cytoplasm</location>
    </subcellularLocation>
</comment>
<comment type="similarity">
    <text evidence="1">Belongs to the HisA/HisF family.</text>
</comment>
<comment type="caution">
    <text evidence="2">Ala-129 is present instead of the conserved Asp which is expected to be an active site residue.</text>
</comment>
<accession>Q8FNZ7</accession>
<feature type="chain" id="PRO_0000142000" description="1-(5-phosphoribosyl)-5-[(5-phosphoribosylamino)methylideneamino] imidazole-4-carboxamide isomerase">
    <location>
        <begin position="1"/>
        <end position="246"/>
    </location>
</feature>
<feature type="active site" description="Proton acceptor" evidence="1">
    <location>
        <position position="10"/>
    </location>
</feature>
<feature type="strand" evidence="3">
    <location>
        <begin position="4"/>
        <end position="12"/>
    </location>
</feature>
<feature type="strand" evidence="3">
    <location>
        <begin position="15"/>
        <end position="17"/>
    </location>
</feature>
<feature type="helix" evidence="3">
    <location>
        <begin position="33"/>
        <end position="42"/>
    </location>
</feature>
<feature type="strand" evidence="3">
    <location>
        <begin position="47"/>
        <end position="52"/>
    </location>
</feature>
<feature type="helix" evidence="3">
    <location>
        <begin position="53"/>
        <end position="56"/>
    </location>
</feature>
<feature type="helix" evidence="3">
    <location>
        <begin position="63"/>
        <end position="72"/>
    </location>
</feature>
<feature type="strand" evidence="3">
    <location>
        <begin position="76"/>
        <end position="82"/>
    </location>
</feature>
<feature type="helix" evidence="3">
    <location>
        <begin position="86"/>
        <end position="93"/>
    </location>
</feature>
<feature type="turn" evidence="3">
    <location>
        <begin position="94"/>
        <end position="96"/>
    </location>
</feature>
<feature type="strand" evidence="3">
    <location>
        <begin position="98"/>
        <end position="102"/>
    </location>
</feature>
<feature type="helix" evidence="3">
    <location>
        <begin position="105"/>
        <end position="108"/>
    </location>
</feature>
<feature type="helix" evidence="3">
    <location>
        <begin position="110"/>
        <end position="120"/>
    </location>
</feature>
<feature type="helix" evidence="3">
    <location>
        <begin position="121"/>
        <end position="123"/>
    </location>
</feature>
<feature type="strand" evidence="3">
    <location>
        <begin position="124"/>
        <end position="133"/>
    </location>
</feature>
<feature type="strand" evidence="3">
    <location>
        <begin position="136"/>
        <end position="139"/>
    </location>
</feature>
<feature type="helix" evidence="3">
    <location>
        <begin position="151"/>
        <end position="160"/>
    </location>
</feature>
<feature type="strand" evidence="3">
    <location>
        <begin position="166"/>
        <end position="170"/>
    </location>
</feature>
<feature type="helix" evidence="3">
    <location>
        <begin position="173"/>
        <end position="175"/>
    </location>
</feature>
<feature type="strand" evidence="3">
    <location>
        <begin position="176"/>
        <end position="178"/>
    </location>
</feature>
<feature type="helix" evidence="3">
    <location>
        <begin position="182"/>
        <end position="191"/>
    </location>
</feature>
<feature type="strand" evidence="3">
    <location>
        <begin position="196"/>
        <end position="200"/>
    </location>
</feature>
<feature type="helix" evidence="3">
    <location>
        <begin position="205"/>
        <end position="212"/>
    </location>
</feature>
<feature type="helix" evidence="3">
    <location>
        <begin position="213"/>
        <end position="217"/>
    </location>
</feature>
<feature type="strand" evidence="3">
    <location>
        <begin position="219"/>
        <end position="225"/>
    </location>
</feature>
<feature type="helix" evidence="3">
    <location>
        <begin position="226"/>
        <end position="229"/>
    </location>
</feature>
<feature type="helix" evidence="3">
    <location>
        <begin position="235"/>
        <end position="246"/>
    </location>
</feature>
<sequence length="246" mass="26624">MTFTILPAVDVVNGQAVRLDQGEAGTEKSYGTPLESALRWQEQGAEWLHFVDLDAAFNRGSNHELMAEITRQLDIKVELTGGIRDDASLERALATGATRVNIGTAALEKPEWIADVIRRHGEKIAVDIAVRLENGEWRTKGNGWVSDGGDLWEVLERLDSQGCSRFVVTDVSKDGTLTGPNVDLLRDVAAATDAPIVASGGISTLEDVLGLAKYQDEGIDSVIIGKALYEHRFTLAEALEAVEKLG</sequence>
<dbReference type="EC" id="5.3.1.16" evidence="1"/>
<dbReference type="EMBL" id="BA000035">
    <property type="protein sequence ID" value="BAC18806.1"/>
    <property type="molecule type" value="Genomic_DNA"/>
</dbReference>
<dbReference type="RefSeq" id="WP_006767994.1">
    <property type="nucleotide sequence ID" value="NC_004369.1"/>
</dbReference>
<dbReference type="PDB" id="4AXK">
    <property type="method" value="X-ray"/>
    <property type="resolution" value="2.25 A"/>
    <property type="chains" value="A/B=1-246"/>
</dbReference>
<dbReference type="PDBsum" id="4AXK"/>
<dbReference type="SMR" id="Q8FNZ7"/>
<dbReference type="STRING" id="196164.gene:10742424"/>
<dbReference type="KEGG" id="cef:CE1996"/>
<dbReference type="eggNOG" id="COG0106">
    <property type="taxonomic scope" value="Bacteria"/>
</dbReference>
<dbReference type="HOGENOM" id="CLU_048577_1_1_11"/>
<dbReference type="OrthoDB" id="9807749at2"/>
<dbReference type="UniPathway" id="UPA00031">
    <property type="reaction ID" value="UER00009"/>
</dbReference>
<dbReference type="EvolutionaryTrace" id="Q8FNZ7"/>
<dbReference type="Proteomes" id="UP000001409">
    <property type="component" value="Chromosome"/>
</dbReference>
<dbReference type="GO" id="GO:0005737">
    <property type="term" value="C:cytoplasm"/>
    <property type="evidence" value="ECO:0007669"/>
    <property type="project" value="UniProtKB-SubCell"/>
</dbReference>
<dbReference type="GO" id="GO:0003949">
    <property type="term" value="F:1-(5-phosphoribosyl)-5-[(5-phosphoribosylamino)methylideneamino]imidazole-4-carboxamide isomerase activity"/>
    <property type="evidence" value="ECO:0007669"/>
    <property type="project" value="UniProtKB-UniRule"/>
</dbReference>
<dbReference type="GO" id="GO:0004640">
    <property type="term" value="F:phosphoribosylanthranilate isomerase activity"/>
    <property type="evidence" value="ECO:0007669"/>
    <property type="project" value="InterPro"/>
</dbReference>
<dbReference type="GO" id="GO:0000105">
    <property type="term" value="P:L-histidine biosynthetic process"/>
    <property type="evidence" value="ECO:0007669"/>
    <property type="project" value="UniProtKB-UniRule"/>
</dbReference>
<dbReference type="GO" id="GO:0000162">
    <property type="term" value="P:L-tryptophan biosynthetic process"/>
    <property type="evidence" value="ECO:0007669"/>
    <property type="project" value="InterPro"/>
</dbReference>
<dbReference type="CDD" id="cd04732">
    <property type="entry name" value="HisA"/>
    <property type="match status" value="1"/>
</dbReference>
<dbReference type="FunFam" id="3.20.20.70:FF:000009">
    <property type="entry name" value="1-(5-phosphoribosyl)-5-[(5-phosphoribosylamino)methylideneamino] imidazole-4-carboxamide isomerase"/>
    <property type="match status" value="1"/>
</dbReference>
<dbReference type="Gene3D" id="3.20.20.70">
    <property type="entry name" value="Aldolase class I"/>
    <property type="match status" value="1"/>
</dbReference>
<dbReference type="HAMAP" id="MF_01014">
    <property type="entry name" value="HisA"/>
    <property type="match status" value="1"/>
</dbReference>
<dbReference type="InterPro" id="IPR013785">
    <property type="entry name" value="Aldolase_TIM"/>
</dbReference>
<dbReference type="InterPro" id="IPR006062">
    <property type="entry name" value="His_biosynth"/>
</dbReference>
<dbReference type="InterPro" id="IPR010188">
    <property type="entry name" value="HisA/PriA_Actinobacteria"/>
</dbReference>
<dbReference type="InterPro" id="IPR044524">
    <property type="entry name" value="Isoase_HisA-like"/>
</dbReference>
<dbReference type="InterPro" id="IPR023016">
    <property type="entry name" value="Isoase_HisA-like_bact"/>
</dbReference>
<dbReference type="InterPro" id="IPR011060">
    <property type="entry name" value="RibuloseP-bd_barrel"/>
</dbReference>
<dbReference type="NCBIfam" id="TIGR01919">
    <property type="entry name" value="hisA-trpF"/>
    <property type="match status" value="1"/>
</dbReference>
<dbReference type="PANTHER" id="PTHR43090">
    <property type="entry name" value="1-(5-PHOSPHORIBOSYL)-5-[(5-PHOSPHORIBOSYLAMINO)METHYLIDENEAMINO] IMIDAZOLE-4-CARBOXAMIDE ISOMERASE"/>
    <property type="match status" value="1"/>
</dbReference>
<dbReference type="PANTHER" id="PTHR43090:SF2">
    <property type="entry name" value="1-(5-PHOSPHORIBOSYL)-5-[(5-PHOSPHORIBOSYLAMINO)METHYLIDENEAMINO] IMIDAZOLE-4-CARBOXAMIDE ISOMERASE"/>
    <property type="match status" value="1"/>
</dbReference>
<dbReference type="Pfam" id="PF00977">
    <property type="entry name" value="His_biosynth"/>
    <property type="match status" value="1"/>
</dbReference>
<dbReference type="SUPFAM" id="SSF51366">
    <property type="entry name" value="Ribulose-phoshate binding barrel"/>
    <property type="match status" value="1"/>
</dbReference>
<evidence type="ECO:0000255" key="1">
    <source>
        <dbReference type="HAMAP-Rule" id="MF_01014"/>
    </source>
</evidence>
<evidence type="ECO:0000305" key="2"/>
<evidence type="ECO:0007829" key="3">
    <source>
        <dbReference type="PDB" id="4AXK"/>
    </source>
</evidence>
<proteinExistence type="evidence at protein level"/>